<comment type="function">
    <text evidence="1">Catalyzes a trans-dehydration via an enolate intermediate.</text>
</comment>
<comment type="catalytic activity">
    <reaction evidence="1">
        <text>3-dehydroquinate = 3-dehydroshikimate + H2O</text>
        <dbReference type="Rhea" id="RHEA:21096"/>
        <dbReference type="ChEBI" id="CHEBI:15377"/>
        <dbReference type="ChEBI" id="CHEBI:16630"/>
        <dbReference type="ChEBI" id="CHEBI:32364"/>
        <dbReference type="EC" id="4.2.1.10"/>
    </reaction>
</comment>
<comment type="pathway">
    <text evidence="1">Metabolic intermediate biosynthesis; chorismate biosynthesis; chorismate from D-erythrose 4-phosphate and phosphoenolpyruvate: step 3/7.</text>
</comment>
<comment type="subunit">
    <text evidence="1">Homododecamer.</text>
</comment>
<comment type="similarity">
    <text evidence="1">Belongs to the type-II 3-dehydroquinase family.</text>
</comment>
<protein>
    <recommendedName>
        <fullName evidence="1">3-dehydroquinate dehydratase</fullName>
        <shortName evidence="1">3-dehydroquinase</shortName>
        <ecNumber evidence="1">4.2.1.10</ecNumber>
    </recommendedName>
    <alternativeName>
        <fullName evidence="1">Type II DHQase</fullName>
    </alternativeName>
</protein>
<organism>
    <name type="scientific">Roseiflexus castenholzii (strain DSM 13941 / HLO8)</name>
    <dbReference type="NCBI Taxonomy" id="383372"/>
    <lineage>
        <taxon>Bacteria</taxon>
        <taxon>Bacillati</taxon>
        <taxon>Chloroflexota</taxon>
        <taxon>Chloroflexia</taxon>
        <taxon>Chloroflexales</taxon>
        <taxon>Roseiflexineae</taxon>
        <taxon>Roseiflexaceae</taxon>
        <taxon>Roseiflexus</taxon>
    </lineage>
</organism>
<evidence type="ECO:0000255" key="1">
    <source>
        <dbReference type="HAMAP-Rule" id="MF_00169"/>
    </source>
</evidence>
<reference key="1">
    <citation type="submission" date="2007-08" db="EMBL/GenBank/DDBJ databases">
        <title>Complete sequence of Roseiflexus castenholzii DSM 13941.</title>
        <authorList>
            <consortium name="US DOE Joint Genome Institute"/>
            <person name="Copeland A."/>
            <person name="Lucas S."/>
            <person name="Lapidus A."/>
            <person name="Barry K."/>
            <person name="Glavina del Rio T."/>
            <person name="Dalin E."/>
            <person name="Tice H."/>
            <person name="Pitluck S."/>
            <person name="Thompson L.S."/>
            <person name="Brettin T."/>
            <person name="Bruce D."/>
            <person name="Detter J.C."/>
            <person name="Han C."/>
            <person name="Tapia R."/>
            <person name="Schmutz J."/>
            <person name="Larimer F."/>
            <person name="Land M."/>
            <person name="Hauser L."/>
            <person name="Kyrpides N."/>
            <person name="Mikhailova N."/>
            <person name="Bryant D.A."/>
            <person name="Hanada S."/>
            <person name="Tsukatani Y."/>
            <person name="Richardson P."/>
        </authorList>
    </citation>
    <scope>NUCLEOTIDE SEQUENCE [LARGE SCALE GENOMIC DNA]</scope>
    <source>
        <strain>DSM 13941 / HLO8</strain>
    </source>
</reference>
<dbReference type="EC" id="4.2.1.10" evidence="1"/>
<dbReference type="EMBL" id="CP000804">
    <property type="protein sequence ID" value="ABU59771.1"/>
    <property type="molecule type" value="Genomic_DNA"/>
</dbReference>
<dbReference type="RefSeq" id="WP_012122194.1">
    <property type="nucleotide sequence ID" value="NC_009767.1"/>
</dbReference>
<dbReference type="SMR" id="A7NQC5"/>
<dbReference type="STRING" id="383372.Rcas_3731"/>
<dbReference type="KEGG" id="rca:Rcas_3731"/>
<dbReference type="eggNOG" id="COG0757">
    <property type="taxonomic scope" value="Bacteria"/>
</dbReference>
<dbReference type="HOGENOM" id="CLU_090968_1_0_0"/>
<dbReference type="OrthoDB" id="9790793at2"/>
<dbReference type="UniPathway" id="UPA00053">
    <property type="reaction ID" value="UER00086"/>
</dbReference>
<dbReference type="Proteomes" id="UP000000263">
    <property type="component" value="Chromosome"/>
</dbReference>
<dbReference type="GO" id="GO:0003855">
    <property type="term" value="F:3-dehydroquinate dehydratase activity"/>
    <property type="evidence" value="ECO:0007669"/>
    <property type="project" value="UniProtKB-UniRule"/>
</dbReference>
<dbReference type="GO" id="GO:0008652">
    <property type="term" value="P:amino acid biosynthetic process"/>
    <property type="evidence" value="ECO:0007669"/>
    <property type="project" value="UniProtKB-KW"/>
</dbReference>
<dbReference type="GO" id="GO:0009073">
    <property type="term" value="P:aromatic amino acid family biosynthetic process"/>
    <property type="evidence" value="ECO:0007669"/>
    <property type="project" value="UniProtKB-KW"/>
</dbReference>
<dbReference type="GO" id="GO:0009423">
    <property type="term" value="P:chorismate biosynthetic process"/>
    <property type="evidence" value="ECO:0007669"/>
    <property type="project" value="UniProtKB-UniRule"/>
</dbReference>
<dbReference type="GO" id="GO:0019631">
    <property type="term" value="P:quinate catabolic process"/>
    <property type="evidence" value="ECO:0007669"/>
    <property type="project" value="TreeGrafter"/>
</dbReference>
<dbReference type="CDD" id="cd00466">
    <property type="entry name" value="DHQase_II"/>
    <property type="match status" value="1"/>
</dbReference>
<dbReference type="Gene3D" id="3.40.50.9100">
    <property type="entry name" value="Dehydroquinase, class II"/>
    <property type="match status" value="1"/>
</dbReference>
<dbReference type="HAMAP" id="MF_00169">
    <property type="entry name" value="AroQ"/>
    <property type="match status" value="1"/>
</dbReference>
<dbReference type="InterPro" id="IPR001874">
    <property type="entry name" value="DHquinase_II"/>
</dbReference>
<dbReference type="InterPro" id="IPR018509">
    <property type="entry name" value="DHquinase_II_CS"/>
</dbReference>
<dbReference type="InterPro" id="IPR036441">
    <property type="entry name" value="DHquinase_II_sf"/>
</dbReference>
<dbReference type="NCBIfam" id="TIGR01088">
    <property type="entry name" value="aroQ"/>
    <property type="match status" value="1"/>
</dbReference>
<dbReference type="NCBIfam" id="NF003805">
    <property type="entry name" value="PRK05395.1-2"/>
    <property type="match status" value="1"/>
</dbReference>
<dbReference type="NCBIfam" id="NF003806">
    <property type="entry name" value="PRK05395.1-3"/>
    <property type="match status" value="1"/>
</dbReference>
<dbReference type="NCBIfam" id="NF003807">
    <property type="entry name" value="PRK05395.1-4"/>
    <property type="match status" value="1"/>
</dbReference>
<dbReference type="PANTHER" id="PTHR21272">
    <property type="entry name" value="CATABOLIC 3-DEHYDROQUINASE"/>
    <property type="match status" value="1"/>
</dbReference>
<dbReference type="PANTHER" id="PTHR21272:SF3">
    <property type="entry name" value="CATABOLIC 3-DEHYDROQUINASE"/>
    <property type="match status" value="1"/>
</dbReference>
<dbReference type="Pfam" id="PF01220">
    <property type="entry name" value="DHquinase_II"/>
    <property type="match status" value="1"/>
</dbReference>
<dbReference type="PIRSF" id="PIRSF001399">
    <property type="entry name" value="DHquinase_II"/>
    <property type="match status" value="1"/>
</dbReference>
<dbReference type="SUPFAM" id="SSF52304">
    <property type="entry name" value="Type II 3-dehydroquinate dehydratase"/>
    <property type="match status" value="1"/>
</dbReference>
<dbReference type="PROSITE" id="PS01029">
    <property type="entry name" value="DEHYDROQUINASE_II"/>
    <property type="match status" value="1"/>
</dbReference>
<proteinExistence type="inferred from homology"/>
<gene>
    <name evidence="1" type="primary">aroQ</name>
    <name type="ordered locus">Rcas_3731</name>
</gene>
<sequence length="157" mass="17011">MKILVIHGPNLNMLGRREPEVYGSVTLDEINAILQERAAAVGVTLLTVQSNHEGALIDFLQAEGWDADGIIINPGALTHYGLALRDALAMLKAPIIEVHLSNVYRREPFRHTSVIAPVATGQIAGLGWRGYLLAIEWLLGTRGQGPGTRDQALGTRD</sequence>
<accession>A7NQC5</accession>
<name>AROQ_ROSCS</name>
<feature type="chain" id="PRO_1000077056" description="3-dehydroquinate dehydratase">
    <location>
        <begin position="1"/>
        <end position="157"/>
    </location>
</feature>
<feature type="active site" description="Proton acceptor" evidence="1">
    <location>
        <position position="22"/>
    </location>
</feature>
<feature type="active site" description="Proton donor" evidence="1">
    <location>
        <position position="99"/>
    </location>
</feature>
<feature type="binding site" evidence="1">
    <location>
        <position position="73"/>
    </location>
    <ligand>
        <name>substrate</name>
    </ligand>
</feature>
<feature type="binding site" evidence="1">
    <location>
        <position position="79"/>
    </location>
    <ligand>
        <name>substrate</name>
    </ligand>
</feature>
<feature type="binding site" evidence="1">
    <location>
        <position position="86"/>
    </location>
    <ligand>
        <name>substrate</name>
    </ligand>
</feature>
<feature type="binding site" evidence="1">
    <location>
        <begin position="100"/>
        <end position="101"/>
    </location>
    <ligand>
        <name>substrate</name>
    </ligand>
</feature>
<feature type="binding site" evidence="1">
    <location>
        <position position="110"/>
    </location>
    <ligand>
        <name>substrate</name>
    </ligand>
</feature>
<feature type="site" description="Transition state stabilizer" evidence="1">
    <location>
        <position position="17"/>
    </location>
</feature>
<keyword id="KW-0028">Amino-acid biosynthesis</keyword>
<keyword id="KW-0057">Aromatic amino acid biosynthesis</keyword>
<keyword id="KW-0456">Lyase</keyword>
<keyword id="KW-1185">Reference proteome</keyword>